<protein>
    <recommendedName>
        <fullName>Arginine--tRNA ligase</fullName>
        <ecNumber>6.1.1.19</ecNumber>
    </recommendedName>
    <alternativeName>
        <fullName>Arginyl-tRNA synthetase</fullName>
        <shortName>ArgRS</shortName>
    </alternativeName>
</protein>
<proteinExistence type="inferred from homology"/>
<sequence length="537" mass="62406">MFFIINDLKECISALKLKFDDQKELVKLVKNNSFNGFSSTIIFQLKSENHKKIADSIVEWFLKNKKDNYQNVFIANNNFINFQISYQKYLEYLIKTPCFTKKNIKILIESVSANPTGRIHLGHVRIAFFGDVLNNLAKLLGYTTVCEYWVNDYGQQARVFSFSVYQSLQLKKNIAIQQHPDGYSGIVIDKIASEIENFPVDNLNFEEFCKTSFLDHFLVNCTQKVLSLIKSDLNKIHVFIDSWKFESEIVKKTNFNDLLEQLKPNSYFYQDNALWLKTTLYGDDKDRVLIRSDKRASYFGTDVAYHLEKLQRGFDILFNVWGTDHEGHIKRMYCAFDALKNTTKTSLKIFALQLVTLYKNKELVRLSKRAGNVITIETMLSMISEDAARWFMLSQNNGTIIKIDLDIANLQNSANPVYYVQYAFARMNSILRIANSDQLKEITDCSLLINEKEISLLNQLVYYPFMLQKAMETGELHLLTNFLYETASLFHSWYKVCKINDDKNSLLSAQRLALLRSLQFIVKQILDVLKISTPQQM</sequence>
<accession>P47618</accession>
<accession>Q49291</accession>
<accession>Q49444</accession>
<evidence type="ECO:0000250" key="1"/>
<evidence type="ECO:0000305" key="2"/>
<reference key="1">
    <citation type="journal article" date="1995" name="Science">
        <title>The minimal gene complement of Mycoplasma genitalium.</title>
        <authorList>
            <person name="Fraser C.M."/>
            <person name="Gocayne J.D."/>
            <person name="White O."/>
            <person name="Adams M.D."/>
            <person name="Clayton R.A."/>
            <person name="Fleischmann R.D."/>
            <person name="Bult C.J."/>
            <person name="Kerlavage A.R."/>
            <person name="Sutton G.G."/>
            <person name="Kelley J.M."/>
            <person name="Fritchman J.L."/>
            <person name="Weidman J.F."/>
            <person name="Small K.V."/>
            <person name="Sandusky M."/>
            <person name="Fuhrmann J.L."/>
            <person name="Nguyen D.T."/>
            <person name="Utterback T.R."/>
            <person name="Saudek D.M."/>
            <person name="Phillips C.A."/>
            <person name="Merrick J.M."/>
            <person name="Tomb J.-F."/>
            <person name="Dougherty B.A."/>
            <person name="Bott K.F."/>
            <person name="Hu P.-C."/>
            <person name="Lucier T.S."/>
            <person name="Peterson S.N."/>
            <person name="Smith H.O."/>
            <person name="Hutchison C.A. III"/>
            <person name="Venter J.C."/>
        </authorList>
    </citation>
    <scope>NUCLEOTIDE SEQUENCE [LARGE SCALE GENOMIC DNA]</scope>
    <source>
        <strain>ATCC 33530 / DSM 19775 / NCTC 10195 / G37</strain>
    </source>
</reference>
<reference key="2">
    <citation type="journal article" date="1993" name="J. Bacteriol.">
        <title>A survey of the Mycoplasma genitalium genome by using random sequencing.</title>
        <authorList>
            <person name="Peterson S.N."/>
            <person name="Hu P.-C."/>
            <person name="Bott K.F."/>
            <person name="Hutchison C.A. III"/>
        </authorList>
    </citation>
    <scope>NUCLEOTIDE SEQUENCE [GENOMIC DNA] OF 153-255 AND 350-455</scope>
    <source>
        <strain>ATCC 33530 / DSM 19775 / NCTC 10195 / G37</strain>
    </source>
</reference>
<feature type="chain" id="PRO_0000151576" description="Arginine--tRNA ligase">
    <location>
        <begin position="1"/>
        <end position="537"/>
    </location>
</feature>
<feature type="short sequence motif" description="'HIGH' region">
    <location>
        <begin position="113"/>
        <end position="123"/>
    </location>
</feature>
<feature type="sequence conflict" description="In Ref. 2." evidence="2" ref="2">
    <original>YG</original>
    <variation>MW</variation>
    <location>
        <begin position="153"/>
        <end position="154"/>
    </location>
</feature>
<feature type="sequence conflict" description="In Ref. 2." evidence="2" ref="2">
    <original>FALQLV</original>
    <variation>MHYNWI</variation>
    <location>
        <begin position="350"/>
        <end position="355"/>
    </location>
</feature>
<dbReference type="EC" id="6.1.1.19"/>
<dbReference type="EMBL" id="L43967">
    <property type="protein sequence ID" value="AAC71605.1"/>
    <property type="molecule type" value="Genomic_DNA"/>
</dbReference>
<dbReference type="EMBL" id="U02168">
    <property type="protein sequence ID" value="AAD12450.1"/>
    <property type="molecule type" value="Genomic_DNA"/>
</dbReference>
<dbReference type="EMBL" id="U01740">
    <property type="protein sequence ID" value="AAD10550.1"/>
    <property type="molecule type" value="Genomic_DNA"/>
</dbReference>
<dbReference type="PIR" id="H64241">
    <property type="entry name" value="H64241"/>
</dbReference>
<dbReference type="RefSeq" id="WP_009885941.1">
    <property type="nucleotide sequence ID" value="NC_000908.2"/>
</dbReference>
<dbReference type="SMR" id="P47618"/>
<dbReference type="FunCoup" id="P47618">
    <property type="interactions" value="182"/>
</dbReference>
<dbReference type="STRING" id="243273.MG_378"/>
<dbReference type="GeneID" id="88282561"/>
<dbReference type="KEGG" id="mge:MG_378"/>
<dbReference type="eggNOG" id="COG0018">
    <property type="taxonomic scope" value="Bacteria"/>
</dbReference>
<dbReference type="HOGENOM" id="CLU_006406_0_1_14"/>
<dbReference type="InParanoid" id="P47618"/>
<dbReference type="OrthoDB" id="9805987at2"/>
<dbReference type="BioCyc" id="MGEN243273:G1GJ2-472-MONOMER"/>
<dbReference type="Proteomes" id="UP000000807">
    <property type="component" value="Chromosome"/>
</dbReference>
<dbReference type="GO" id="GO:0005737">
    <property type="term" value="C:cytoplasm"/>
    <property type="evidence" value="ECO:0007669"/>
    <property type="project" value="UniProtKB-SubCell"/>
</dbReference>
<dbReference type="GO" id="GO:0004814">
    <property type="term" value="F:arginine-tRNA ligase activity"/>
    <property type="evidence" value="ECO:0000318"/>
    <property type="project" value="GO_Central"/>
</dbReference>
<dbReference type="GO" id="GO:0005524">
    <property type="term" value="F:ATP binding"/>
    <property type="evidence" value="ECO:0007669"/>
    <property type="project" value="UniProtKB-UniRule"/>
</dbReference>
<dbReference type="GO" id="GO:0006420">
    <property type="term" value="P:arginyl-tRNA aminoacylation"/>
    <property type="evidence" value="ECO:0000318"/>
    <property type="project" value="GO_Central"/>
</dbReference>
<dbReference type="CDD" id="cd00671">
    <property type="entry name" value="ArgRS_core"/>
    <property type="match status" value="1"/>
</dbReference>
<dbReference type="FunFam" id="1.10.730.10:FF:000006">
    <property type="entry name" value="Arginyl-tRNA synthetase 2, mitochondrial"/>
    <property type="match status" value="1"/>
</dbReference>
<dbReference type="Gene3D" id="3.40.50.620">
    <property type="entry name" value="HUPs"/>
    <property type="match status" value="1"/>
</dbReference>
<dbReference type="Gene3D" id="1.10.730.10">
    <property type="entry name" value="Isoleucyl-tRNA Synthetase, Domain 1"/>
    <property type="match status" value="1"/>
</dbReference>
<dbReference type="HAMAP" id="MF_00123">
    <property type="entry name" value="Arg_tRNA_synth"/>
    <property type="match status" value="1"/>
</dbReference>
<dbReference type="InterPro" id="IPR001412">
    <property type="entry name" value="aa-tRNA-synth_I_CS"/>
</dbReference>
<dbReference type="InterPro" id="IPR001278">
    <property type="entry name" value="Arg-tRNA-ligase"/>
</dbReference>
<dbReference type="InterPro" id="IPR035684">
    <property type="entry name" value="ArgRS_core"/>
</dbReference>
<dbReference type="InterPro" id="IPR008909">
    <property type="entry name" value="DALR_anticod-bd"/>
</dbReference>
<dbReference type="InterPro" id="IPR014729">
    <property type="entry name" value="Rossmann-like_a/b/a_fold"/>
</dbReference>
<dbReference type="InterPro" id="IPR009080">
    <property type="entry name" value="tRNAsynth_Ia_anticodon-bd"/>
</dbReference>
<dbReference type="NCBIfam" id="TIGR00456">
    <property type="entry name" value="argS"/>
    <property type="match status" value="1"/>
</dbReference>
<dbReference type="PANTHER" id="PTHR11956:SF5">
    <property type="entry name" value="ARGININE--TRNA LIGASE, CYTOPLASMIC"/>
    <property type="match status" value="1"/>
</dbReference>
<dbReference type="PANTHER" id="PTHR11956">
    <property type="entry name" value="ARGINYL-TRNA SYNTHETASE"/>
    <property type="match status" value="1"/>
</dbReference>
<dbReference type="Pfam" id="PF05746">
    <property type="entry name" value="DALR_1"/>
    <property type="match status" value="1"/>
</dbReference>
<dbReference type="Pfam" id="PF00750">
    <property type="entry name" value="tRNA-synt_1d"/>
    <property type="match status" value="1"/>
</dbReference>
<dbReference type="PRINTS" id="PR01038">
    <property type="entry name" value="TRNASYNTHARG"/>
</dbReference>
<dbReference type="SMART" id="SM00836">
    <property type="entry name" value="DALR_1"/>
    <property type="match status" value="1"/>
</dbReference>
<dbReference type="SUPFAM" id="SSF47323">
    <property type="entry name" value="Anticodon-binding domain of a subclass of class I aminoacyl-tRNA synthetases"/>
    <property type="match status" value="1"/>
</dbReference>
<dbReference type="SUPFAM" id="SSF52374">
    <property type="entry name" value="Nucleotidylyl transferase"/>
    <property type="match status" value="1"/>
</dbReference>
<dbReference type="PROSITE" id="PS00178">
    <property type="entry name" value="AA_TRNA_LIGASE_I"/>
    <property type="match status" value="1"/>
</dbReference>
<keyword id="KW-0030">Aminoacyl-tRNA synthetase</keyword>
<keyword id="KW-0067">ATP-binding</keyword>
<keyword id="KW-0963">Cytoplasm</keyword>
<keyword id="KW-0436">Ligase</keyword>
<keyword id="KW-0547">Nucleotide-binding</keyword>
<keyword id="KW-0648">Protein biosynthesis</keyword>
<keyword id="KW-1185">Reference proteome</keyword>
<comment type="catalytic activity">
    <reaction>
        <text>tRNA(Arg) + L-arginine + ATP = L-arginyl-tRNA(Arg) + AMP + diphosphate</text>
        <dbReference type="Rhea" id="RHEA:20301"/>
        <dbReference type="Rhea" id="RHEA-COMP:9658"/>
        <dbReference type="Rhea" id="RHEA-COMP:9673"/>
        <dbReference type="ChEBI" id="CHEBI:30616"/>
        <dbReference type="ChEBI" id="CHEBI:32682"/>
        <dbReference type="ChEBI" id="CHEBI:33019"/>
        <dbReference type="ChEBI" id="CHEBI:78442"/>
        <dbReference type="ChEBI" id="CHEBI:78513"/>
        <dbReference type="ChEBI" id="CHEBI:456215"/>
        <dbReference type="EC" id="6.1.1.19"/>
    </reaction>
</comment>
<comment type="subunit">
    <text evidence="1">Monomer.</text>
</comment>
<comment type="subcellular location">
    <subcellularLocation>
        <location evidence="1">Cytoplasm</location>
    </subcellularLocation>
</comment>
<comment type="similarity">
    <text evidence="2">Belongs to the class-I aminoacyl-tRNA synthetase family.</text>
</comment>
<organism>
    <name type="scientific">Mycoplasma genitalium (strain ATCC 33530 / DSM 19775 / NCTC 10195 / G37)</name>
    <name type="common">Mycoplasmoides genitalium</name>
    <dbReference type="NCBI Taxonomy" id="243273"/>
    <lineage>
        <taxon>Bacteria</taxon>
        <taxon>Bacillati</taxon>
        <taxon>Mycoplasmatota</taxon>
        <taxon>Mycoplasmoidales</taxon>
        <taxon>Mycoplasmoidaceae</taxon>
        <taxon>Mycoplasmoides</taxon>
    </lineage>
</organism>
<name>SYR_MYCGE</name>
<gene>
    <name type="primary">argS</name>
    <name type="ordered locus">MG378</name>
</gene>